<feature type="chain" id="PRO_0000193245" description="Demethylmenaquinone methyltransferase">
    <location>
        <begin position="1"/>
        <end position="235"/>
    </location>
</feature>
<feature type="binding site" evidence="1">
    <location>
        <position position="58"/>
    </location>
    <ligand>
        <name>S-adenosyl-L-methionine</name>
        <dbReference type="ChEBI" id="CHEBI:59789"/>
    </ligand>
</feature>
<feature type="binding site" evidence="1">
    <location>
        <position position="79"/>
    </location>
    <ligand>
        <name>S-adenosyl-L-methionine</name>
        <dbReference type="ChEBI" id="CHEBI:59789"/>
    </ligand>
</feature>
<feature type="binding site" evidence="1">
    <location>
        <begin position="106"/>
        <end position="107"/>
    </location>
    <ligand>
        <name>S-adenosyl-L-methionine</name>
        <dbReference type="ChEBI" id="CHEBI:59789"/>
    </ligand>
</feature>
<accession>Q5WGT4</accession>
<reference key="1">
    <citation type="submission" date="2003-10" db="EMBL/GenBank/DDBJ databases">
        <title>The complete genome sequence of the alkaliphilic Bacillus clausii KSM-K16.</title>
        <authorList>
            <person name="Takaki Y."/>
            <person name="Kageyama Y."/>
            <person name="Shimamura S."/>
            <person name="Suzuki H."/>
            <person name="Nishi S."/>
            <person name="Hatada Y."/>
            <person name="Kawai S."/>
            <person name="Ito S."/>
            <person name="Horikoshi K."/>
        </authorList>
    </citation>
    <scope>NUCLEOTIDE SEQUENCE [LARGE SCALE GENOMIC DNA]</scope>
    <source>
        <strain>KSM-K16</strain>
    </source>
</reference>
<name>MENG_SHOC1</name>
<keyword id="KW-0474">Menaquinone biosynthesis</keyword>
<keyword id="KW-0489">Methyltransferase</keyword>
<keyword id="KW-1185">Reference proteome</keyword>
<keyword id="KW-0949">S-adenosyl-L-methionine</keyword>
<keyword id="KW-0808">Transferase</keyword>
<dbReference type="EC" id="2.1.1.163" evidence="1"/>
<dbReference type="EMBL" id="AP006627">
    <property type="protein sequence ID" value="BAD64421.1"/>
    <property type="molecule type" value="Genomic_DNA"/>
</dbReference>
<dbReference type="RefSeq" id="WP_011246729.1">
    <property type="nucleotide sequence ID" value="NC_006582.1"/>
</dbReference>
<dbReference type="SMR" id="Q5WGT4"/>
<dbReference type="STRING" id="66692.ABC1886"/>
<dbReference type="KEGG" id="bcl:ABC1886"/>
<dbReference type="eggNOG" id="COG2226">
    <property type="taxonomic scope" value="Bacteria"/>
</dbReference>
<dbReference type="HOGENOM" id="CLU_037990_0_0_9"/>
<dbReference type="OrthoDB" id="9808140at2"/>
<dbReference type="UniPathway" id="UPA00079">
    <property type="reaction ID" value="UER00169"/>
</dbReference>
<dbReference type="Proteomes" id="UP000001168">
    <property type="component" value="Chromosome"/>
</dbReference>
<dbReference type="GO" id="GO:0043770">
    <property type="term" value="F:demethylmenaquinone methyltransferase activity"/>
    <property type="evidence" value="ECO:0007669"/>
    <property type="project" value="UniProtKB-UniRule"/>
</dbReference>
<dbReference type="GO" id="GO:0009234">
    <property type="term" value="P:menaquinone biosynthetic process"/>
    <property type="evidence" value="ECO:0007669"/>
    <property type="project" value="UniProtKB-UniRule"/>
</dbReference>
<dbReference type="GO" id="GO:0032259">
    <property type="term" value="P:methylation"/>
    <property type="evidence" value="ECO:0007669"/>
    <property type="project" value="UniProtKB-KW"/>
</dbReference>
<dbReference type="CDD" id="cd02440">
    <property type="entry name" value="AdoMet_MTases"/>
    <property type="match status" value="1"/>
</dbReference>
<dbReference type="FunFam" id="3.40.50.150:FF:000086">
    <property type="entry name" value="Demethylmenaquinone methyltransferase"/>
    <property type="match status" value="1"/>
</dbReference>
<dbReference type="Gene3D" id="3.40.50.150">
    <property type="entry name" value="Vaccinia Virus protein VP39"/>
    <property type="match status" value="1"/>
</dbReference>
<dbReference type="HAMAP" id="MF_01813">
    <property type="entry name" value="MenG_UbiE_methyltr"/>
    <property type="match status" value="1"/>
</dbReference>
<dbReference type="InterPro" id="IPR014122">
    <property type="entry name" value="MenG_heptapren"/>
</dbReference>
<dbReference type="InterPro" id="IPR029063">
    <property type="entry name" value="SAM-dependent_MTases_sf"/>
</dbReference>
<dbReference type="InterPro" id="IPR004033">
    <property type="entry name" value="UbiE/COQ5_MeTrFase"/>
</dbReference>
<dbReference type="InterPro" id="IPR023576">
    <property type="entry name" value="UbiE/COQ5_MeTrFase_CS"/>
</dbReference>
<dbReference type="NCBIfam" id="TIGR02752">
    <property type="entry name" value="MenG_heptapren"/>
    <property type="match status" value="1"/>
</dbReference>
<dbReference type="NCBIfam" id="TIGR01934">
    <property type="entry name" value="MenG_MenH_UbiE"/>
    <property type="match status" value="1"/>
</dbReference>
<dbReference type="NCBIfam" id="NF001243">
    <property type="entry name" value="PRK00216.1-4"/>
    <property type="match status" value="1"/>
</dbReference>
<dbReference type="NCBIfam" id="NF001244">
    <property type="entry name" value="PRK00216.1-5"/>
    <property type="match status" value="1"/>
</dbReference>
<dbReference type="PANTHER" id="PTHR43591:SF24">
    <property type="entry name" value="2-METHOXY-6-POLYPRENYL-1,4-BENZOQUINOL METHYLASE, MITOCHONDRIAL"/>
    <property type="match status" value="1"/>
</dbReference>
<dbReference type="PANTHER" id="PTHR43591">
    <property type="entry name" value="METHYLTRANSFERASE"/>
    <property type="match status" value="1"/>
</dbReference>
<dbReference type="Pfam" id="PF01209">
    <property type="entry name" value="Ubie_methyltran"/>
    <property type="match status" value="1"/>
</dbReference>
<dbReference type="SUPFAM" id="SSF53335">
    <property type="entry name" value="S-adenosyl-L-methionine-dependent methyltransferases"/>
    <property type="match status" value="1"/>
</dbReference>
<dbReference type="PROSITE" id="PS51608">
    <property type="entry name" value="SAM_MT_UBIE"/>
    <property type="match status" value="1"/>
</dbReference>
<dbReference type="PROSITE" id="PS01183">
    <property type="entry name" value="UBIE_1"/>
    <property type="match status" value="1"/>
</dbReference>
<sequence length="235" mass="26360">MAQSKEQRVHDVFQSIYKKYDVMNSVISLQQHKSWRKDTMKQMDVQAGTSALDVCCGTGDWTLALSEAVGEQGSVIGLDFSENMLAVGREKVAAAKRTNISLVHGNAMALPYDDNTFDYVTIGFGLRNVPDYMQVLQEMCRVAKPGGKIVCLETSQPTIPVFKQLYFFYFKRIMPLAGKVFAKKYEEYSWLQESTLAFPGKDKLRDMFVEAGMKDVTVKSYTGGVCAMHMGIKPI</sequence>
<organism>
    <name type="scientific">Shouchella clausii (strain KSM-K16)</name>
    <name type="common">Alkalihalobacillus clausii</name>
    <dbReference type="NCBI Taxonomy" id="66692"/>
    <lineage>
        <taxon>Bacteria</taxon>
        <taxon>Bacillati</taxon>
        <taxon>Bacillota</taxon>
        <taxon>Bacilli</taxon>
        <taxon>Bacillales</taxon>
        <taxon>Bacillaceae</taxon>
        <taxon>Shouchella</taxon>
    </lineage>
</organism>
<gene>
    <name evidence="1" type="primary">menG</name>
    <name type="ordered locus">ABC1886</name>
</gene>
<evidence type="ECO:0000255" key="1">
    <source>
        <dbReference type="HAMAP-Rule" id="MF_01813"/>
    </source>
</evidence>
<protein>
    <recommendedName>
        <fullName evidence="1">Demethylmenaquinone methyltransferase</fullName>
        <ecNumber evidence="1">2.1.1.163</ecNumber>
    </recommendedName>
</protein>
<proteinExistence type="inferred from homology"/>
<comment type="function">
    <text evidence="1">Methyltransferase required for the conversion of demethylmenaquinol (DMKH2) to menaquinol (MKH2).</text>
</comment>
<comment type="catalytic activity">
    <reaction evidence="1">
        <text>a 2-demethylmenaquinol + S-adenosyl-L-methionine = a menaquinol + S-adenosyl-L-homocysteine + H(+)</text>
        <dbReference type="Rhea" id="RHEA:42640"/>
        <dbReference type="Rhea" id="RHEA-COMP:9539"/>
        <dbReference type="Rhea" id="RHEA-COMP:9563"/>
        <dbReference type="ChEBI" id="CHEBI:15378"/>
        <dbReference type="ChEBI" id="CHEBI:18151"/>
        <dbReference type="ChEBI" id="CHEBI:55437"/>
        <dbReference type="ChEBI" id="CHEBI:57856"/>
        <dbReference type="ChEBI" id="CHEBI:59789"/>
        <dbReference type="EC" id="2.1.1.163"/>
    </reaction>
</comment>
<comment type="pathway">
    <text evidence="1">Quinol/quinone metabolism; menaquinone biosynthesis; menaquinol from 1,4-dihydroxy-2-naphthoate: step 2/2.</text>
</comment>
<comment type="similarity">
    <text evidence="1">Belongs to the class I-like SAM-binding methyltransferase superfamily. MenG/UbiE family.</text>
</comment>